<gene>
    <name evidence="5" type="primary">Avh5</name>
    <name type="ORF">PHYSODRAFT_286169</name>
</gene>
<sequence length="135" mass="15528">MRLQFFLVMAVATLATISATRVPDDANLQSVNAPVQTVTRSRRFLRTADTDIVYEPKVHNPGKKQVFIEDKLQKALTDPKKNKKLYARWYNSGFTVKQVEGGLDQNENRELELTYKNLALGYAKYYQARRSQEAK</sequence>
<comment type="function">
    <text evidence="3">Effector that suppresses plant defense responses during the early stages of pathogen infection. Suppresses cell death induced by effectors and PAMPs in plant hosts.</text>
</comment>
<comment type="subcellular location">
    <subcellularLocation>
        <location evidence="2">Secreted</location>
    </subcellularLocation>
    <subcellularLocation>
        <location evidence="2">Host cell</location>
    </subcellularLocation>
</comment>
<comment type="domain">
    <text evidence="4">The RxLR-dEER motif acts to carry the protein into the host cell cytoplasm through binding to cell surface phosphatidylinositol-3-phosphate.</text>
</comment>
<comment type="similarity">
    <text evidence="6">Belongs to the RxLR effector family.</text>
</comment>
<reference key="1">
    <citation type="journal article" date="2006" name="Science">
        <title>Phytophthora genome sequences uncover evolutionary origins and mechanisms of pathogenesis.</title>
        <authorList>
            <person name="Tyler B.M."/>
            <person name="Tripathy S."/>
            <person name="Zhang X."/>
            <person name="Dehal P."/>
            <person name="Jiang R.H.Y."/>
            <person name="Aerts A."/>
            <person name="Arredondo F.D."/>
            <person name="Baxter L."/>
            <person name="Bensasson D."/>
            <person name="Beynon J.L."/>
            <person name="Chapman J."/>
            <person name="Damasceno C.M.B."/>
            <person name="Dorrance A.E."/>
            <person name="Dou D."/>
            <person name="Dickerman A.W."/>
            <person name="Dubchak I.L."/>
            <person name="Garbelotto M."/>
            <person name="Gijzen M."/>
            <person name="Gordon S.G."/>
            <person name="Govers F."/>
            <person name="Grunwald N.J."/>
            <person name="Huang W."/>
            <person name="Ivors K.L."/>
            <person name="Jones R.W."/>
            <person name="Kamoun S."/>
            <person name="Krampis K."/>
            <person name="Lamour K.H."/>
            <person name="Lee M.-K."/>
            <person name="McDonald W.H."/>
            <person name="Medina M."/>
            <person name="Meijer H.J.G."/>
            <person name="Nordberg E.K."/>
            <person name="Maclean D.J."/>
            <person name="Ospina-Giraldo M.D."/>
            <person name="Morris P.F."/>
            <person name="Phuntumart V."/>
            <person name="Putnam N.H."/>
            <person name="Rash S."/>
            <person name="Rose J.K.C."/>
            <person name="Sakihama Y."/>
            <person name="Salamov A.A."/>
            <person name="Savidor A."/>
            <person name="Scheuring C.F."/>
            <person name="Smith B.M."/>
            <person name="Sobral B.W.S."/>
            <person name="Terry A."/>
            <person name="Torto-Alalibo T.A."/>
            <person name="Win J."/>
            <person name="Xu Z."/>
            <person name="Zhang H."/>
            <person name="Grigoriev I.V."/>
            <person name="Rokhsar D.S."/>
            <person name="Boore J.L."/>
        </authorList>
    </citation>
    <scope>NUCLEOTIDE SEQUENCE [LARGE SCALE GENOMIC DNA]</scope>
    <source>
        <strain>P6497</strain>
    </source>
</reference>
<reference key="2">
    <citation type="journal article" date="2010" name="Cell">
        <title>External lipid PI3P mediates entry of eukaryotic pathogen effectors into plant and animal host cells.</title>
        <authorList>
            <person name="Kale S.D."/>
            <person name="Gu B."/>
            <person name="Capelluto D.G."/>
            <person name="Dou D."/>
            <person name="Feldman E."/>
            <person name="Rumore A."/>
            <person name="Arredondo F.D."/>
            <person name="Hanlon R."/>
            <person name="Fudal I."/>
            <person name="Rouxel T."/>
            <person name="Lawrence C.B."/>
            <person name="Shan W."/>
            <person name="Tyler B.M."/>
        </authorList>
    </citation>
    <scope>DOMAIN</scope>
    <scope>SUBCELLULAR LOCATION</scope>
</reference>
<reference key="3">
    <citation type="journal article" date="2011" name="Plant Cell">
        <title>Transcriptional programming and functional interactions within the Phytophthora sojae RXLR effector repertoire.</title>
        <authorList>
            <person name="Wang Q."/>
            <person name="Han C."/>
            <person name="Ferreira A.O."/>
            <person name="Yu X."/>
            <person name="Ye W."/>
            <person name="Tripathy S."/>
            <person name="Kale S.D."/>
            <person name="Gu B."/>
            <person name="Sheng Y."/>
            <person name="Sui Y."/>
            <person name="Wang X."/>
            <person name="Zhang Z."/>
            <person name="Cheng B."/>
            <person name="Dong S."/>
            <person name="Shan W."/>
            <person name="Zheng X."/>
            <person name="Dou D."/>
            <person name="Tyler B.M."/>
            <person name="Wang Y."/>
        </authorList>
    </citation>
    <scope>IDENTIFICATION</scope>
    <scope>FUNCTION</scope>
    <scope>DOMAIN</scope>
</reference>
<reference key="4">
    <citation type="journal article" date="2013" name="Mol. Plant Microbe Interact.">
        <title>Structural basis for interactions of the Phytophthora sojae RxLR effector Avh5 with phosphatidylinositol 3-phosphate and for host cell entry.</title>
        <authorList>
            <person name="Sun F."/>
            <person name="Kale S.D."/>
            <person name="Azurmendi H.F."/>
            <person name="Li D."/>
            <person name="Tyler B.M."/>
            <person name="Capelluto D.G."/>
        </authorList>
    </citation>
    <scope>STRUCTURE BY NMR OF 20-135</scope>
    <scope>PTDINS(3)P-BINDING</scope>
    <scope>MUTAGENESIS OF 43-ARG--ARG-46 AND 81-LYS--LYS-84</scope>
</reference>
<feature type="signal peptide" evidence="1">
    <location>
        <begin position="1"/>
        <end position="19"/>
    </location>
</feature>
<feature type="chain" id="PRO_5003472292" description="RxLR effector protein Avh5">
    <location>
        <begin position="20"/>
        <end position="135"/>
    </location>
</feature>
<feature type="short sequence motif" description="RxLR-dEER" evidence="7">
    <location>
        <begin position="43"/>
        <end position="71"/>
    </location>
</feature>
<feature type="binding site" evidence="4">
    <location>
        <position position="81"/>
    </location>
    <ligand>
        <name>a 1,2-diacyl-sn-glycero-3-phospho-(1D-myo-inositol-3-phosphate)</name>
        <dbReference type="ChEBI" id="CHEBI:58088"/>
    </ligand>
</feature>
<feature type="binding site" evidence="4">
    <location>
        <position position="83"/>
    </location>
    <ligand>
        <name>a 1,2-diacyl-sn-glycero-3-phospho-(1D-myo-inositol-3-phosphate)</name>
        <dbReference type="ChEBI" id="CHEBI:58088"/>
    </ligand>
</feature>
<feature type="binding site" evidence="4">
    <location>
        <position position="84"/>
    </location>
    <ligand>
        <name>a 1,2-diacyl-sn-glycero-3-phospho-(1D-myo-inositol-3-phosphate)</name>
        <dbReference type="ChEBI" id="CHEBI:58088"/>
    </ligand>
</feature>
<feature type="mutagenesis site" description="Reduces PtdIns(3)P-binding and entry into host cells." evidence="4">
    <original>RFLR</original>
    <variation>AAAA</variation>
    <location>
        <begin position="43"/>
        <end position="46"/>
    </location>
</feature>
<feature type="mutagenesis site" description="Reduces PtdIns(3)P-binding and entry into host cells." evidence="4">
    <original>KNKK</original>
    <variation>ANAA</variation>
    <location>
        <begin position="81"/>
        <end position="84"/>
    </location>
</feature>
<keyword id="KW-1185">Reference proteome</keyword>
<keyword id="KW-0964">Secreted</keyword>
<keyword id="KW-0732">Signal</keyword>
<keyword id="KW-0843">Virulence</keyword>
<dbReference type="EMBL" id="JH159155">
    <property type="protein sequence ID" value="EGZ14529.1"/>
    <property type="molecule type" value="Genomic_DNA"/>
</dbReference>
<dbReference type="SMR" id="G4ZKT3"/>
<dbReference type="STRING" id="1094619.G4ZKT3"/>
<dbReference type="EnsemblProtists" id="EGZ14529">
    <property type="protein sequence ID" value="EGZ14529"/>
    <property type="gene ID" value="PHYSODRAFT_286169"/>
</dbReference>
<dbReference type="KEGG" id="psoj:PHYSODRAFT_286169"/>
<dbReference type="InParanoid" id="G4ZKT3"/>
<dbReference type="OMA" id="REYIDWR"/>
<dbReference type="Proteomes" id="UP000002640">
    <property type="component" value="Unassembled WGS sequence"/>
</dbReference>
<dbReference type="GO" id="GO:0005576">
    <property type="term" value="C:extracellular region"/>
    <property type="evidence" value="ECO:0007669"/>
    <property type="project" value="UniProtKB-SubCell"/>
</dbReference>
<dbReference type="GO" id="GO:0043657">
    <property type="term" value="C:host cell"/>
    <property type="evidence" value="ECO:0007669"/>
    <property type="project" value="UniProtKB-SubCell"/>
</dbReference>
<dbReference type="Gene3D" id="1.10.10.2460">
    <property type="match status" value="1"/>
</dbReference>
<dbReference type="InterPro" id="IPR031825">
    <property type="entry name" value="RXLR"/>
</dbReference>
<dbReference type="Pfam" id="PF16810">
    <property type="entry name" value="RXLR"/>
    <property type="match status" value="1"/>
</dbReference>
<organism>
    <name type="scientific">Phytophthora sojae (strain P6497)</name>
    <name type="common">Soybean stem and root rot agent</name>
    <name type="synonym">Phytophthora megasperma f. sp. glycines</name>
    <dbReference type="NCBI Taxonomy" id="1094619"/>
    <lineage>
        <taxon>Eukaryota</taxon>
        <taxon>Sar</taxon>
        <taxon>Stramenopiles</taxon>
        <taxon>Oomycota</taxon>
        <taxon>Peronosporales</taxon>
        <taxon>Peronosporaceae</taxon>
        <taxon>Phytophthora</taxon>
    </lineage>
</organism>
<accession>G4ZKT3</accession>
<proteinExistence type="evidence at protein level"/>
<name>AVH5_PHYSP</name>
<evidence type="ECO:0000255" key="1"/>
<evidence type="ECO:0000269" key="2">
    <source>
    </source>
</evidence>
<evidence type="ECO:0000269" key="3">
    <source>
    </source>
</evidence>
<evidence type="ECO:0000269" key="4">
    <source>
    </source>
</evidence>
<evidence type="ECO:0000303" key="5">
    <source>
    </source>
</evidence>
<evidence type="ECO:0000305" key="6"/>
<evidence type="ECO:0000305" key="7">
    <source>
    </source>
</evidence>
<protein>
    <recommendedName>
        <fullName evidence="5">RxLR effector protein Avh5</fullName>
    </recommendedName>
    <alternativeName>
        <fullName evidence="5">Avirulence homolog protein 5</fullName>
    </alternativeName>
</protein>